<sequence length="170" mass="18742">MNLKDFIRDIPDFPKPGIIFKDVTPMLKDPGAFKVCISSLKELVKDFEFNLIVAPEARGFIFAAPLALELEKGFVPIRKPGKLPYKTVSVEYSLEYGTATLEMHTDAIKEGDKVLIVDDVLATGGTMKAIAEMVEKVGGTISGIVSLVELSFLEPRKKLSGYEVRSIITY</sequence>
<feature type="chain" id="PRO_1000201668" description="Adenine phosphoribosyltransferase">
    <location>
        <begin position="1"/>
        <end position="170"/>
    </location>
</feature>
<proteinExistence type="inferred from homology"/>
<protein>
    <recommendedName>
        <fullName evidence="1">Adenine phosphoribosyltransferase</fullName>
        <shortName evidence="1">APRT</shortName>
        <ecNumber evidence="1">2.4.2.7</ecNumber>
    </recommendedName>
</protein>
<organism>
    <name type="scientific">Kosmotoga olearia (strain ATCC BAA-1733 / DSM 21960 / TBF 19.5.1)</name>
    <dbReference type="NCBI Taxonomy" id="521045"/>
    <lineage>
        <taxon>Bacteria</taxon>
        <taxon>Thermotogati</taxon>
        <taxon>Thermotogota</taxon>
        <taxon>Thermotogae</taxon>
        <taxon>Kosmotogales</taxon>
        <taxon>Kosmotogaceae</taxon>
        <taxon>Kosmotoga</taxon>
    </lineage>
</organism>
<keyword id="KW-0963">Cytoplasm</keyword>
<keyword id="KW-0328">Glycosyltransferase</keyword>
<keyword id="KW-0660">Purine salvage</keyword>
<keyword id="KW-1185">Reference proteome</keyword>
<keyword id="KW-0808">Transferase</keyword>
<gene>
    <name evidence="1" type="primary">apt</name>
    <name type="ordered locus">Kole_0179</name>
</gene>
<dbReference type="EC" id="2.4.2.7" evidence="1"/>
<dbReference type="EMBL" id="CP001634">
    <property type="protein sequence ID" value="ACR78905.1"/>
    <property type="molecule type" value="Genomic_DNA"/>
</dbReference>
<dbReference type="RefSeq" id="WP_012744693.1">
    <property type="nucleotide sequence ID" value="NC_012785.1"/>
</dbReference>
<dbReference type="SMR" id="C5CIH1"/>
<dbReference type="STRING" id="521045.Kole_0179"/>
<dbReference type="KEGG" id="kol:Kole_0179"/>
<dbReference type="eggNOG" id="COG0503">
    <property type="taxonomic scope" value="Bacteria"/>
</dbReference>
<dbReference type="HOGENOM" id="CLU_063339_3_0_0"/>
<dbReference type="OrthoDB" id="9803963at2"/>
<dbReference type="UniPathway" id="UPA00588">
    <property type="reaction ID" value="UER00646"/>
</dbReference>
<dbReference type="Proteomes" id="UP000002382">
    <property type="component" value="Chromosome"/>
</dbReference>
<dbReference type="GO" id="GO:0005737">
    <property type="term" value="C:cytoplasm"/>
    <property type="evidence" value="ECO:0007669"/>
    <property type="project" value="UniProtKB-SubCell"/>
</dbReference>
<dbReference type="GO" id="GO:0002055">
    <property type="term" value="F:adenine binding"/>
    <property type="evidence" value="ECO:0007669"/>
    <property type="project" value="TreeGrafter"/>
</dbReference>
<dbReference type="GO" id="GO:0003999">
    <property type="term" value="F:adenine phosphoribosyltransferase activity"/>
    <property type="evidence" value="ECO:0007669"/>
    <property type="project" value="UniProtKB-UniRule"/>
</dbReference>
<dbReference type="GO" id="GO:0016208">
    <property type="term" value="F:AMP binding"/>
    <property type="evidence" value="ECO:0007669"/>
    <property type="project" value="TreeGrafter"/>
</dbReference>
<dbReference type="GO" id="GO:0006168">
    <property type="term" value="P:adenine salvage"/>
    <property type="evidence" value="ECO:0007669"/>
    <property type="project" value="InterPro"/>
</dbReference>
<dbReference type="GO" id="GO:0044209">
    <property type="term" value="P:AMP salvage"/>
    <property type="evidence" value="ECO:0007669"/>
    <property type="project" value="UniProtKB-UniRule"/>
</dbReference>
<dbReference type="GO" id="GO:0006166">
    <property type="term" value="P:purine ribonucleoside salvage"/>
    <property type="evidence" value="ECO:0007669"/>
    <property type="project" value="UniProtKB-KW"/>
</dbReference>
<dbReference type="CDD" id="cd06223">
    <property type="entry name" value="PRTases_typeI"/>
    <property type="match status" value="1"/>
</dbReference>
<dbReference type="FunFam" id="3.40.50.2020:FF:000004">
    <property type="entry name" value="Adenine phosphoribosyltransferase"/>
    <property type="match status" value="1"/>
</dbReference>
<dbReference type="Gene3D" id="3.40.50.2020">
    <property type="match status" value="1"/>
</dbReference>
<dbReference type="HAMAP" id="MF_00004">
    <property type="entry name" value="Aden_phosphoribosyltr"/>
    <property type="match status" value="1"/>
</dbReference>
<dbReference type="InterPro" id="IPR005764">
    <property type="entry name" value="Ade_phspho_trans"/>
</dbReference>
<dbReference type="InterPro" id="IPR000836">
    <property type="entry name" value="PRibTrfase_dom"/>
</dbReference>
<dbReference type="InterPro" id="IPR029057">
    <property type="entry name" value="PRTase-like"/>
</dbReference>
<dbReference type="InterPro" id="IPR050054">
    <property type="entry name" value="UPRTase/APRTase"/>
</dbReference>
<dbReference type="NCBIfam" id="TIGR01090">
    <property type="entry name" value="apt"/>
    <property type="match status" value="1"/>
</dbReference>
<dbReference type="NCBIfam" id="NF002633">
    <property type="entry name" value="PRK02304.1-2"/>
    <property type="match status" value="1"/>
</dbReference>
<dbReference type="NCBIfam" id="NF002634">
    <property type="entry name" value="PRK02304.1-3"/>
    <property type="match status" value="1"/>
</dbReference>
<dbReference type="NCBIfam" id="NF002636">
    <property type="entry name" value="PRK02304.1-5"/>
    <property type="match status" value="1"/>
</dbReference>
<dbReference type="PANTHER" id="PTHR32315">
    <property type="entry name" value="ADENINE PHOSPHORIBOSYLTRANSFERASE"/>
    <property type="match status" value="1"/>
</dbReference>
<dbReference type="PANTHER" id="PTHR32315:SF3">
    <property type="entry name" value="ADENINE PHOSPHORIBOSYLTRANSFERASE"/>
    <property type="match status" value="1"/>
</dbReference>
<dbReference type="Pfam" id="PF00156">
    <property type="entry name" value="Pribosyltran"/>
    <property type="match status" value="1"/>
</dbReference>
<dbReference type="SUPFAM" id="SSF53271">
    <property type="entry name" value="PRTase-like"/>
    <property type="match status" value="1"/>
</dbReference>
<dbReference type="PROSITE" id="PS00103">
    <property type="entry name" value="PUR_PYR_PR_TRANSFER"/>
    <property type="match status" value="1"/>
</dbReference>
<name>APT_KOSOT</name>
<reference key="1">
    <citation type="submission" date="2009-06" db="EMBL/GenBank/DDBJ databases">
        <title>Complete sequence of Thermotogales bacterium TBF 19.5.1.</title>
        <authorList>
            <consortium name="US DOE Joint Genome Institute"/>
            <person name="Lucas S."/>
            <person name="Copeland A."/>
            <person name="Lapidus A."/>
            <person name="Glavina del Rio T."/>
            <person name="Tice H."/>
            <person name="Bruce D."/>
            <person name="Goodwin L."/>
            <person name="Pitluck S."/>
            <person name="Chertkov O."/>
            <person name="Brettin T."/>
            <person name="Detter J.C."/>
            <person name="Han C."/>
            <person name="Schmutz J."/>
            <person name="Larimer F."/>
            <person name="Land M."/>
            <person name="Hauser L."/>
            <person name="Kyrpides N."/>
            <person name="Ovchinnikova G."/>
            <person name="Noll K."/>
        </authorList>
    </citation>
    <scope>NUCLEOTIDE SEQUENCE [LARGE SCALE GENOMIC DNA]</scope>
    <source>
        <strain>ATCC BAA-1733 / DSM 21960 / TBF 19.5.1</strain>
    </source>
</reference>
<accession>C5CIH1</accession>
<evidence type="ECO:0000255" key="1">
    <source>
        <dbReference type="HAMAP-Rule" id="MF_00004"/>
    </source>
</evidence>
<comment type="function">
    <text evidence="1">Catalyzes a salvage reaction resulting in the formation of AMP, that is energically less costly than de novo synthesis.</text>
</comment>
<comment type="catalytic activity">
    <reaction evidence="1">
        <text>AMP + diphosphate = 5-phospho-alpha-D-ribose 1-diphosphate + adenine</text>
        <dbReference type="Rhea" id="RHEA:16609"/>
        <dbReference type="ChEBI" id="CHEBI:16708"/>
        <dbReference type="ChEBI" id="CHEBI:33019"/>
        <dbReference type="ChEBI" id="CHEBI:58017"/>
        <dbReference type="ChEBI" id="CHEBI:456215"/>
        <dbReference type="EC" id="2.4.2.7"/>
    </reaction>
</comment>
<comment type="pathway">
    <text evidence="1">Purine metabolism; AMP biosynthesis via salvage pathway; AMP from adenine: step 1/1.</text>
</comment>
<comment type="subunit">
    <text evidence="1">Homodimer.</text>
</comment>
<comment type="subcellular location">
    <subcellularLocation>
        <location evidence="1">Cytoplasm</location>
    </subcellularLocation>
</comment>
<comment type="similarity">
    <text evidence="1">Belongs to the purine/pyrimidine phosphoribosyltransferase family.</text>
</comment>